<accession>Q65EM1</accession>
<accession>Q62Q38</accession>
<name>LUTC_BACLD</name>
<gene>
    <name evidence="1" type="primary">lutC</name>
    <name type="synonym">yvbY</name>
    <name type="ordered locus">BLi03673</name>
    <name type="ordered locus">BL03458</name>
</gene>
<dbReference type="EMBL" id="AE017333">
    <property type="protein sequence ID" value="AAU42493.1"/>
    <property type="molecule type" value="Genomic_DNA"/>
</dbReference>
<dbReference type="EMBL" id="CP000002">
    <property type="protein sequence ID" value="AAU25122.1"/>
    <property type="molecule type" value="Genomic_DNA"/>
</dbReference>
<dbReference type="RefSeq" id="WP_003185480.1">
    <property type="nucleotide sequence ID" value="NC_006322.1"/>
</dbReference>
<dbReference type="SMR" id="Q65EM1"/>
<dbReference type="STRING" id="279010.BL03458"/>
<dbReference type="KEGG" id="bld:BLi03673"/>
<dbReference type="KEGG" id="bli:BL03458"/>
<dbReference type="eggNOG" id="COG1556">
    <property type="taxonomic scope" value="Bacteria"/>
</dbReference>
<dbReference type="HOGENOM" id="CLU_090664_1_0_9"/>
<dbReference type="Proteomes" id="UP000000606">
    <property type="component" value="Chromosome"/>
</dbReference>
<dbReference type="GO" id="GO:0006089">
    <property type="term" value="P:lactate metabolic process"/>
    <property type="evidence" value="ECO:0007669"/>
    <property type="project" value="UniProtKB-UniRule"/>
</dbReference>
<dbReference type="Gene3D" id="3.40.50.10420">
    <property type="entry name" value="NagB/RpiA/CoA transferase-like"/>
    <property type="match status" value="1"/>
</dbReference>
<dbReference type="HAMAP" id="MF_02104">
    <property type="entry name" value="LutC"/>
    <property type="match status" value="1"/>
</dbReference>
<dbReference type="InterPro" id="IPR024185">
    <property type="entry name" value="FTHF_cligase-like_sf"/>
</dbReference>
<dbReference type="InterPro" id="IPR003741">
    <property type="entry name" value="LUD_dom"/>
</dbReference>
<dbReference type="InterPro" id="IPR022823">
    <property type="entry name" value="LutC"/>
</dbReference>
<dbReference type="InterPro" id="IPR037171">
    <property type="entry name" value="NagB/RpiA_transferase-like"/>
</dbReference>
<dbReference type="PANTHER" id="PTHR43682">
    <property type="entry name" value="LACTATE UTILIZATION PROTEIN C"/>
    <property type="match status" value="1"/>
</dbReference>
<dbReference type="PANTHER" id="PTHR43682:SF1">
    <property type="entry name" value="LACTATE UTILIZATION PROTEIN C"/>
    <property type="match status" value="1"/>
</dbReference>
<dbReference type="Pfam" id="PF02589">
    <property type="entry name" value="LUD_dom"/>
    <property type="match status" value="1"/>
</dbReference>
<dbReference type="SUPFAM" id="SSF100950">
    <property type="entry name" value="NagB/RpiA/CoA transferase-like"/>
    <property type="match status" value="1"/>
</dbReference>
<comment type="function">
    <text evidence="1">Is involved in L-lactate degradation and allows cells to grow with lactate as the sole carbon source.</text>
</comment>
<comment type="similarity">
    <text evidence="1">Belongs to the LutC/YkgG family.</text>
</comment>
<proteinExistence type="inferred from homology"/>
<keyword id="KW-1185">Reference proteome</keyword>
<organism>
    <name type="scientific">Bacillus licheniformis (strain ATCC 14580 / DSM 13 / JCM 2505 / CCUG 7422 / NBRC 12200 / NCIMB 9375 / NCTC 10341 / NRRL NRS-1264 / Gibson 46)</name>
    <dbReference type="NCBI Taxonomy" id="279010"/>
    <lineage>
        <taxon>Bacteria</taxon>
        <taxon>Bacillati</taxon>
        <taxon>Bacillota</taxon>
        <taxon>Bacilli</taxon>
        <taxon>Bacillales</taxon>
        <taxon>Bacillaceae</taxon>
        <taxon>Bacillus</taxon>
    </lineage>
</organism>
<reference key="1">
    <citation type="journal article" date="2004" name="J. Mol. Microbiol. Biotechnol.">
        <title>The complete genome sequence of Bacillus licheniformis DSM13, an organism with great industrial potential.</title>
        <authorList>
            <person name="Veith B."/>
            <person name="Herzberg C."/>
            <person name="Steckel S."/>
            <person name="Feesche J."/>
            <person name="Maurer K.H."/>
            <person name="Ehrenreich P."/>
            <person name="Baeumer S."/>
            <person name="Henne A."/>
            <person name="Liesegang H."/>
            <person name="Merkl R."/>
            <person name="Ehrenreich A."/>
            <person name="Gottschalk G."/>
        </authorList>
    </citation>
    <scope>NUCLEOTIDE SEQUENCE [LARGE SCALE GENOMIC DNA]</scope>
    <source>
        <strain>ATCC 14580 / DSM 13 / JCM 2505 / CCUG 7422 / NBRC 12200 / NCIMB 9375 / NCTC 10341 / NRRL NRS-1264 / Gibson 46</strain>
    </source>
</reference>
<reference key="2">
    <citation type="journal article" date="2004" name="Genome Biol.">
        <title>Complete genome sequence of the industrial bacterium Bacillus licheniformis and comparisons with closely related Bacillus species.</title>
        <authorList>
            <person name="Rey M.W."/>
            <person name="Ramaiya P."/>
            <person name="Nelson B.A."/>
            <person name="Brody-Karpin S.D."/>
            <person name="Zaretsky E.J."/>
            <person name="Tang M."/>
            <person name="Lopez de Leon A."/>
            <person name="Xiang H."/>
            <person name="Gusti V."/>
            <person name="Clausen I.G."/>
            <person name="Olsen P.B."/>
            <person name="Rasmussen M.D."/>
            <person name="Andersen J.T."/>
            <person name="Joergensen P.L."/>
            <person name="Larsen T.S."/>
            <person name="Sorokin A."/>
            <person name="Bolotin A."/>
            <person name="Lapidus A."/>
            <person name="Galleron N."/>
            <person name="Ehrlich S.D."/>
            <person name="Berka R.M."/>
        </authorList>
    </citation>
    <scope>NUCLEOTIDE SEQUENCE [LARGE SCALE GENOMIC DNA]</scope>
    <source>
        <strain>ATCC 14580 / DSM 13 / JCM 2505 / CCUG 7422 / NBRC 12200 / NCIMB 9375 / NCTC 10341 / NRRL NRS-1264 / Gibson 46</strain>
    </source>
</reference>
<protein>
    <recommendedName>
        <fullName evidence="1">Lactate utilization protein C</fullName>
    </recommendedName>
</protein>
<evidence type="ECO:0000255" key="1">
    <source>
        <dbReference type="HAMAP-Rule" id="MF_02104"/>
    </source>
</evidence>
<feature type="chain" id="PRO_0000384005" description="Lactate utilization protein C">
    <location>
        <begin position="1"/>
        <end position="240"/>
    </location>
</feature>
<sequence>MTNGTIHNKDGFLNRIAERLGRNRRSAGVTVPDYIHQPQHRVYQGYTQDELVGVLKDHCRKIHTELIETDVIGLHDALYEQAARFGGGPVMIPKDDRFKEYGLSGLLTDKWPNEGTKVWEWDAAAGDENIQRAEQANIGVTFSEITLAESGTVVLFSSKDKGRSVSLLPTTYIAIVPKSTIVPRMTQASAIIKQKIADGDVIPSCINYVTGPSNSADIEMDLVVGVHGPVKAAYIVVEDR</sequence>